<accession>B3DXP7</accession>
<name>MIAA_METI4</name>
<evidence type="ECO:0000255" key="1">
    <source>
        <dbReference type="HAMAP-Rule" id="MF_00185"/>
    </source>
</evidence>
<feature type="chain" id="PRO_0000377217" description="tRNA dimethylallyltransferase">
    <location>
        <begin position="1"/>
        <end position="329"/>
    </location>
</feature>
<feature type="region of interest" description="Interaction with substrate tRNA" evidence="1">
    <location>
        <begin position="49"/>
        <end position="52"/>
    </location>
</feature>
<feature type="binding site" evidence="1">
    <location>
        <begin position="24"/>
        <end position="31"/>
    </location>
    <ligand>
        <name>ATP</name>
        <dbReference type="ChEBI" id="CHEBI:30616"/>
    </ligand>
</feature>
<feature type="binding site" evidence="1">
    <location>
        <begin position="26"/>
        <end position="31"/>
    </location>
    <ligand>
        <name>substrate</name>
    </ligand>
</feature>
<dbReference type="EC" id="2.5.1.75" evidence="1"/>
<dbReference type="EMBL" id="CP000975">
    <property type="protein sequence ID" value="ACD82281.1"/>
    <property type="molecule type" value="Genomic_DNA"/>
</dbReference>
<dbReference type="RefSeq" id="WP_012462563.1">
    <property type="nucleotide sequence ID" value="NC_010794.1"/>
</dbReference>
<dbReference type="SMR" id="B3DXP7"/>
<dbReference type="STRING" id="481448.Minf_0221"/>
<dbReference type="KEGG" id="min:Minf_0221"/>
<dbReference type="eggNOG" id="COG0324">
    <property type="taxonomic scope" value="Bacteria"/>
</dbReference>
<dbReference type="HOGENOM" id="CLU_032616_0_1_0"/>
<dbReference type="OrthoDB" id="9776390at2"/>
<dbReference type="Proteomes" id="UP000009149">
    <property type="component" value="Chromosome"/>
</dbReference>
<dbReference type="GO" id="GO:0005524">
    <property type="term" value="F:ATP binding"/>
    <property type="evidence" value="ECO:0007669"/>
    <property type="project" value="UniProtKB-UniRule"/>
</dbReference>
<dbReference type="GO" id="GO:0052381">
    <property type="term" value="F:tRNA dimethylallyltransferase activity"/>
    <property type="evidence" value="ECO:0007669"/>
    <property type="project" value="UniProtKB-UniRule"/>
</dbReference>
<dbReference type="GO" id="GO:0006400">
    <property type="term" value="P:tRNA modification"/>
    <property type="evidence" value="ECO:0007669"/>
    <property type="project" value="TreeGrafter"/>
</dbReference>
<dbReference type="Gene3D" id="1.10.20.140">
    <property type="match status" value="1"/>
</dbReference>
<dbReference type="Gene3D" id="3.40.50.300">
    <property type="entry name" value="P-loop containing nucleotide triphosphate hydrolases"/>
    <property type="match status" value="1"/>
</dbReference>
<dbReference type="HAMAP" id="MF_00185">
    <property type="entry name" value="IPP_trans"/>
    <property type="match status" value="1"/>
</dbReference>
<dbReference type="InterPro" id="IPR039657">
    <property type="entry name" value="Dimethylallyltransferase"/>
</dbReference>
<dbReference type="InterPro" id="IPR018022">
    <property type="entry name" value="IPT"/>
</dbReference>
<dbReference type="InterPro" id="IPR027417">
    <property type="entry name" value="P-loop_NTPase"/>
</dbReference>
<dbReference type="NCBIfam" id="TIGR00174">
    <property type="entry name" value="miaA"/>
    <property type="match status" value="1"/>
</dbReference>
<dbReference type="PANTHER" id="PTHR11088">
    <property type="entry name" value="TRNA DIMETHYLALLYLTRANSFERASE"/>
    <property type="match status" value="1"/>
</dbReference>
<dbReference type="PANTHER" id="PTHR11088:SF60">
    <property type="entry name" value="TRNA DIMETHYLALLYLTRANSFERASE"/>
    <property type="match status" value="1"/>
</dbReference>
<dbReference type="Pfam" id="PF01715">
    <property type="entry name" value="IPPT"/>
    <property type="match status" value="1"/>
</dbReference>
<dbReference type="SUPFAM" id="SSF52540">
    <property type="entry name" value="P-loop containing nucleoside triphosphate hydrolases"/>
    <property type="match status" value="2"/>
</dbReference>
<comment type="function">
    <text evidence="1">Catalyzes the transfer of a dimethylallyl group onto the adenine at position 37 in tRNAs that read codons beginning with uridine, leading to the formation of N6-(dimethylallyl)adenosine (i(6)A).</text>
</comment>
<comment type="catalytic activity">
    <reaction evidence="1">
        <text>adenosine(37) in tRNA + dimethylallyl diphosphate = N(6)-dimethylallyladenosine(37) in tRNA + diphosphate</text>
        <dbReference type="Rhea" id="RHEA:26482"/>
        <dbReference type="Rhea" id="RHEA-COMP:10162"/>
        <dbReference type="Rhea" id="RHEA-COMP:10375"/>
        <dbReference type="ChEBI" id="CHEBI:33019"/>
        <dbReference type="ChEBI" id="CHEBI:57623"/>
        <dbReference type="ChEBI" id="CHEBI:74411"/>
        <dbReference type="ChEBI" id="CHEBI:74415"/>
        <dbReference type="EC" id="2.5.1.75"/>
    </reaction>
</comment>
<comment type="cofactor">
    <cofactor evidence="1">
        <name>Mg(2+)</name>
        <dbReference type="ChEBI" id="CHEBI:18420"/>
    </cofactor>
</comment>
<comment type="subunit">
    <text evidence="1">Monomer.</text>
</comment>
<comment type="similarity">
    <text evidence="1">Belongs to the IPP transferase family.</text>
</comment>
<proteinExistence type="inferred from homology"/>
<organism>
    <name type="scientific">Methylacidiphilum infernorum (isolate V4)</name>
    <name type="common">Methylokorus infernorum (strain V4)</name>
    <dbReference type="NCBI Taxonomy" id="481448"/>
    <lineage>
        <taxon>Bacteria</taxon>
        <taxon>Pseudomonadati</taxon>
        <taxon>Verrucomicrobiota</taxon>
        <taxon>Methylacidiphilae</taxon>
        <taxon>Methylacidiphilales</taxon>
        <taxon>Methylacidiphilaceae</taxon>
        <taxon>Methylacidiphilum (ex Ratnadevi et al. 2023)</taxon>
    </lineage>
</organism>
<sequence length="329" mass="38539">MVQDIKRAEIALDFKNKPVFFLVGSTGIGKTAIAHRIADEIGLSLLSIDSMQVYRKLDIGTAKPSLSERIRYRYGGIDLVDWKDSFNAFLFVQQACHYLAKEWENRRGVLAVGGCGLYFRAMTRGLCNAPPANLQLRTELEKMDRITLLERLTRIDPSAVAWVDCSNPRRIIRAIEVKETSGISLIEWQKKTTLPLVTPFLAFWIDRPQPEAEIRLRRRIKKMFERGWEEETLMLIEEGGMEAVEKCKAIGYKLIGQFLLQKRKNREELEEAIYRQQHGYAKRQKTWFKKEPSLCYYLLKNPEEEYRFIKSCIEKIAFFIRRNHQDFLY</sequence>
<protein>
    <recommendedName>
        <fullName evidence="1">tRNA dimethylallyltransferase</fullName>
        <ecNumber evidence="1">2.5.1.75</ecNumber>
    </recommendedName>
    <alternativeName>
        <fullName evidence="1">Dimethylallyl diphosphate:tRNA dimethylallyltransferase</fullName>
        <shortName evidence="1">DMAPP:tRNA dimethylallyltransferase</shortName>
        <shortName evidence="1">DMATase</shortName>
    </alternativeName>
    <alternativeName>
        <fullName evidence="1">Isopentenyl-diphosphate:tRNA isopentenyltransferase</fullName>
        <shortName evidence="1">IPP transferase</shortName>
        <shortName evidence="1">IPPT</shortName>
        <shortName evidence="1">IPTase</shortName>
    </alternativeName>
</protein>
<gene>
    <name evidence="1" type="primary">miaA</name>
    <name type="ordered locus">Minf_0221</name>
</gene>
<keyword id="KW-0067">ATP-binding</keyword>
<keyword id="KW-0460">Magnesium</keyword>
<keyword id="KW-0547">Nucleotide-binding</keyword>
<keyword id="KW-0808">Transferase</keyword>
<keyword id="KW-0819">tRNA processing</keyword>
<reference key="1">
    <citation type="journal article" date="2008" name="Biol. Direct">
        <title>Complete genome sequence of the extremely acidophilic methanotroph isolate V4, Methylacidiphilum infernorum, a representative of the bacterial phylum Verrucomicrobia.</title>
        <authorList>
            <person name="Hou S."/>
            <person name="Makarova K.S."/>
            <person name="Saw J.H."/>
            <person name="Senin P."/>
            <person name="Ly B.V."/>
            <person name="Zhou Z."/>
            <person name="Ren Y."/>
            <person name="Wang J."/>
            <person name="Galperin M.Y."/>
            <person name="Omelchenko M.V."/>
            <person name="Wolf Y.I."/>
            <person name="Yutin N."/>
            <person name="Koonin E.V."/>
            <person name="Stott M.B."/>
            <person name="Mountain B.W."/>
            <person name="Crowe M.A."/>
            <person name="Smirnova A.V."/>
            <person name="Dunfield P.F."/>
            <person name="Feng L."/>
            <person name="Wang L."/>
            <person name="Alam M."/>
        </authorList>
    </citation>
    <scope>NUCLEOTIDE SEQUENCE [LARGE SCALE GENOMIC DNA]</scope>
    <source>
        <strain>Isolate V4</strain>
    </source>
</reference>